<sequence>MIIPALDLIDGTVVRLHQGDYGKQRDYGNDPLPRLQDYAAQGAEVLHLVDLTGAKDPAKRQIPLIKTLVAGVNVPVQVGGGVRSEEDVAALLEAGVARVVVGSTAVKSQDMVKGWFERFGADALVLALDVRIDEQGNKQVAVSGWQENSGVSLEQLVETYLPVGLKHVLCTDISRDGTLAGSNVSLYEEVCARYPQVAFQSSGGIGDIDDVAALRGTGVRGVIVGRALLEGKFTVKEAIACWQNA</sequence>
<comment type="catalytic activity">
    <reaction>
        <text>1-(5-phospho-beta-D-ribosyl)-5-[(5-phospho-beta-D-ribosylamino)methylideneamino]imidazole-4-carboxamide = 5-[(5-phospho-1-deoxy-D-ribulos-1-ylimino)methylamino]-1-(5-phospho-beta-D-ribosyl)imidazole-4-carboxamide</text>
        <dbReference type="Rhea" id="RHEA:15469"/>
        <dbReference type="ChEBI" id="CHEBI:58435"/>
        <dbReference type="ChEBI" id="CHEBI:58525"/>
        <dbReference type="EC" id="5.3.1.16"/>
    </reaction>
</comment>
<comment type="pathway">
    <text>Amino-acid biosynthesis; L-histidine biosynthesis; L-histidine from 5-phospho-alpha-D-ribose 1-diphosphate: step 4/9.</text>
</comment>
<comment type="subunit">
    <text>Monomer.</text>
</comment>
<comment type="subcellular location">
    <subcellularLocation>
        <location>Cytoplasm</location>
    </subcellularLocation>
</comment>
<comment type="similarity">
    <text evidence="2">Belongs to the HisA/HisF family.</text>
</comment>
<gene>
    <name type="primary">hisA</name>
    <name type="ordered locus">b2024</name>
    <name type="ordered locus">JW2006</name>
</gene>
<protein>
    <recommendedName>
        <fullName>1-(5-phosphoribosyl)-5-[(5-phosphoribosylamino)methylideneamino] imidazole-4-carboxamide isomerase</fullName>
        <ecNumber>5.3.1.16</ecNumber>
    </recommendedName>
    <alternativeName>
        <fullName>Phosphoribosylformimino-5-aminoimidazole carboxamide ribotide isomerase</fullName>
    </alternativeName>
</protein>
<proteinExistence type="inferred from homology"/>
<accession>P10371</accession>
<accession>P78078</accession>
<name>HIS4_ECOLI</name>
<evidence type="ECO:0000250" key="1"/>
<evidence type="ECO:0000305" key="2"/>
<reference key="1">
    <citation type="journal article" date="1988" name="J. Mol. Biol.">
        <title>Structure and function of the Salmonella typhimurium and Escherichia coli K-12 histidine operons.</title>
        <authorList>
            <person name="Carlomagno M.S."/>
            <person name="Chiariotti L."/>
            <person name="Alifano P."/>
            <person name="Nappo A.G."/>
            <person name="Bruni C.B."/>
        </authorList>
    </citation>
    <scope>NUCLEOTIDE SEQUENCE [GENOMIC DNA]</scope>
    <source>
        <strain>K12</strain>
    </source>
</reference>
<reference key="2">
    <citation type="journal article" date="1996" name="DNA Res.">
        <title>A 460-kb DNA sequence of the Escherichia coli K-12 genome corresponding to the 40.1-50.0 min region on the linkage map.</title>
        <authorList>
            <person name="Itoh T."/>
            <person name="Aiba H."/>
            <person name="Baba T."/>
            <person name="Fujita K."/>
            <person name="Hayashi K."/>
            <person name="Inada T."/>
            <person name="Isono K."/>
            <person name="Kasai H."/>
            <person name="Kimura S."/>
            <person name="Kitakawa M."/>
            <person name="Kitagawa M."/>
            <person name="Makino K."/>
            <person name="Miki T."/>
            <person name="Mizobuchi K."/>
            <person name="Mori H."/>
            <person name="Mori T."/>
            <person name="Motomura K."/>
            <person name="Nakade S."/>
            <person name="Nakamura Y."/>
            <person name="Nashimoto H."/>
            <person name="Nishio Y."/>
            <person name="Oshima T."/>
            <person name="Saito N."/>
            <person name="Sampei G."/>
            <person name="Seki Y."/>
            <person name="Sivasundaram S."/>
            <person name="Tagami H."/>
            <person name="Takeda J."/>
            <person name="Takemoto K."/>
            <person name="Wada C."/>
            <person name="Yamamoto Y."/>
            <person name="Horiuchi T."/>
        </authorList>
    </citation>
    <scope>NUCLEOTIDE SEQUENCE [LARGE SCALE GENOMIC DNA]</scope>
    <source>
        <strain>K12 / W3110 / ATCC 27325 / DSM 5911</strain>
    </source>
</reference>
<reference key="3">
    <citation type="journal article" date="1997" name="Science">
        <title>The complete genome sequence of Escherichia coli K-12.</title>
        <authorList>
            <person name="Blattner F.R."/>
            <person name="Plunkett G. III"/>
            <person name="Bloch C.A."/>
            <person name="Perna N.T."/>
            <person name="Burland V."/>
            <person name="Riley M."/>
            <person name="Collado-Vides J."/>
            <person name="Glasner J.D."/>
            <person name="Rode C.K."/>
            <person name="Mayhew G.F."/>
            <person name="Gregor J."/>
            <person name="Davis N.W."/>
            <person name="Kirkpatrick H.A."/>
            <person name="Goeden M.A."/>
            <person name="Rose D.J."/>
            <person name="Mau B."/>
            <person name="Shao Y."/>
        </authorList>
    </citation>
    <scope>NUCLEOTIDE SEQUENCE [LARGE SCALE GENOMIC DNA]</scope>
    <source>
        <strain>K12 / MG1655 / ATCC 47076</strain>
    </source>
</reference>
<reference key="4">
    <citation type="journal article" date="2006" name="Mol. Syst. Biol.">
        <title>Highly accurate genome sequences of Escherichia coli K-12 strains MG1655 and W3110.</title>
        <authorList>
            <person name="Hayashi K."/>
            <person name="Morooka N."/>
            <person name="Yamamoto Y."/>
            <person name="Fujita K."/>
            <person name="Isono K."/>
            <person name="Choi S."/>
            <person name="Ohtsubo E."/>
            <person name="Baba T."/>
            <person name="Wanner B.L."/>
            <person name="Mori H."/>
            <person name="Horiuchi T."/>
        </authorList>
    </citation>
    <scope>NUCLEOTIDE SEQUENCE [LARGE SCALE GENOMIC DNA]</scope>
    <source>
        <strain>K12 / W3110 / ATCC 27325 / DSM 5911</strain>
    </source>
</reference>
<dbReference type="EC" id="5.3.1.16"/>
<dbReference type="EMBL" id="X13462">
    <property type="protein sequence ID" value="CAA31816.1"/>
    <property type="molecule type" value="Genomic_DNA"/>
</dbReference>
<dbReference type="EMBL" id="U00096">
    <property type="protein sequence ID" value="AAC75085.2"/>
    <property type="molecule type" value="Genomic_DNA"/>
</dbReference>
<dbReference type="EMBL" id="AP009048">
    <property type="protein sequence ID" value="BAA15855.1"/>
    <property type="molecule type" value="Genomic_DNA"/>
</dbReference>
<dbReference type="PIR" id="G64967">
    <property type="entry name" value="ISECIC"/>
</dbReference>
<dbReference type="RefSeq" id="NP_416528.2">
    <property type="nucleotide sequence ID" value="NC_000913.3"/>
</dbReference>
<dbReference type="RefSeq" id="WP_000586462.1">
    <property type="nucleotide sequence ID" value="NZ_SSTT01000011.1"/>
</dbReference>
<dbReference type="SMR" id="P10371"/>
<dbReference type="BioGRID" id="4260420">
    <property type="interactions" value="31"/>
</dbReference>
<dbReference type="FunCoup" id="P10371">
    <property type="interactions" value="623"/>
</dbReference>
<dbReference type="IntAct" id="P10371">
    <property type="interactions" value="3"/>
</dbReference>
<dbReference type="STRING" id="511145.b2024"/>
<dbReference type="jPOST" id="P10371"/>
<dbReference type="PaxDb" id="511145-b2024"/>
<dbReference type="EnsemblBacteria" id="AAC75085">
    <property type="protein sequence ID" value="AAC75085"/>
    <property type="gene ID" value="b2024"/>
</dbReference>
<dbReference type="GeneID" id="946521"/>
<dbReference type="KEGG" id="ecj:JW2006"/>
<dbReference type="KEGG" id="eco:b2024"/>
<dbReference type="KEGG" id="ecoc:C3026_11410"/>
<dbReference type="PATRIC" id="fig|1411691.4.peg.228"/>
<dbReference type="EchoBASE" id="EB0439"/>
<dbReference type="eggNOG" id="COG0106">
    <property type="taxonomic scope" value="Bacteria"/>
</dbReference>
<dbReference type="HOGENOM" id="CLU_048577_1_2_6"/>
<dbReference type="InParanoid" id="P10371"/>
<dbReference type="OMA" id="EWLHLVD"/>
<dbReference type="OrthoDB" id="9807749at2"/>
<dbReference type="PhylomeDB" id="P10371"/>
<dbReference type="BioCyc" id="EcoCyc:PRIBFAICARPISOM-MONOMER"/>
<dbReference type="BioCyc" id="MetaCyc:PRIBFAICARPISOM-MONOMER"/>
<dbReference type="SABIO-RK" id="P10371"/>
<dbReference type="UniPathway" id="UPA00031">
    <property type="reaction ID" value="UER00009"/>
</dbReference>
<dbReference type="PRO" id="PR:P10371"/>
<dbReference type="Proteomes" id="UP000000625">
    <property type="component" value="Chromosome"/>
</dbReference>
<dbReference type="GO" id="GO:0005737">
    <property type="term" value="C:cytoplasm"/>
    <property type="evidence" value="ECO:0000318"/>
    <property type="project" value="GO_Central"/>
</dbReference>
<dbReference type="GO" id="GO:0005829">
    <property type="term" value="C:cytosol"/>
    <property type="evidence" value="ECO:0000314"/>
    <property type="project" value="EcoCyc"/>
</dbReference>
<dbReference type="GO" id="GO:0003949">
    <property type="term" value="F:1-(5-phosphoribosyl)-5-[(5-phosphoribosylamino)methylideneamino]imidazole-4-carboxamide isomerase activity"/>
    <property type="evidence" value="ECO:0000314"/>
    <property type="project" value="EcoCyc"/>
</dbReference>
<dbReference type="GO" id="GO:0006974">
    <property type="term" value="P:DNA damage response"/>
    <property type="evidence" value="ECO:0000270"/>
    <property type="project" value="EcoliWiki"/>
</dbReference>
<dbReference type="GO" id="GO:0000105">
    <property type="term" value="P:L-histidine biosynthetic process"/>
    <property type="evidence" value="ECO:0000314"/>
    <property type="project" value="EcoCyc"/>
</dbReference>
<dbReference type="CDD" id="cd04732">
    <property type="entry name" value="HisA"/>
    <property type="match status" value="1"/>
</dbReference>
<dbReference type="FunFam" id="3.20.20.70:FF:000009">
    <property type="entry name" value="1-(5-phosphoribosyl)-5-[(5-phosphoribosylamino)methylideneamino] imidazole-4-carboxamide isomerase"/>
    <property type="match status" value="1"/>
</dbReference>
<dbReference type="Gene3D" id="3.20.20.70">
    <property type="entry name" value="Aldolase class I"/>
    <property type="match status" value="1"/>
</dbReference>
<dbReference type="HAMAP" id="MF_01014">
    <property type="entry name" value="HisA"/>
    <property type="match status" value="1"/>
</dbReference>
<dbReference type="InterPro" id="IPR013785">
    <property type="entry name" value="Aldolase_TIM"/>
</dbReference>
<dbReference type="InterPro" id="IPR006062">
    <property type="entry name" value="His_biosynth"/>
</dbReference>
<dbReference type="InterPro" id="IPR006063">
    <property type="entry name" value="HisA_bact_arch"/>
</dbReference>
<dbReference type="InterPro" id="IPR044524">
    <property type="entry name" value="Isoase_HisA-like"/>
</dbReference>
<dbReference type="InterPro" id="IPR023016">
    <property type="entry name" value="Isoase_HisA-like_bact"/>
</dbReference>
<dbReference type="InterPro" id="IPR011060">
    <property type="entry name" value="RibuloseP-bd_barrel"/>
</dbReference>
<dbReference type="NCBIfam" id="TIGR00007">
    <property type="entry name" value="1-(5-phosphoribosyl)-5-[(5-phosphoribosylamino)methylideneamino]imidazole-4-carboxamide isomerase"/>
    <property type="match status" value="1"/>
</dbReference>
<dbReference type="PANTHER" id="PTHR43090">
    <property type="entry name" value="1-(5-PHOSPHORIBOSYL)-5-[(5-PHOSPHORIBOSYLAMINO)METHYLIDENEAMINO] IMIDAZOLE-4-CARBOXAMIDE ISOMERASE"/>
    <property type="match status" value="1"/>
</dbReference>
<dbReference type="PANTHER" id="PTHR43090:SF2">
    <property type="entry name" value="1-(5-PHOSPHORIBOSYL)-5-[(5-PHOSPHORIBOSYLAMINO)METHYLIDENEAMINO] IMIDAZOLE-4-CARBOXAMIDE ISOMERASE"/>
    <property type="match status" value="1"/>
</dbReference>
<dbReference type="Pfam" id="PF00977">
    <property type="entry name" value="His_biosynth"/>
    <property type="match status" value="1"/>
</dbReference>
<dbReference type="SUPFAM" id="SSF51366">
    <property type="entry name" value="Ribulose-phoshate binding barrel"/>
    <property type="match status" value="1"/>
</dbReference>
<feature type="chain" id="PRO_0000142004" description="1-(5-phosphoribosyl)-5-[(5-phosphoribosylamino)methylideneamino] imidazole-4-carboxamide isomerase">
    <location>
        <begin position="1"/>
        <end position="245"/>
    </location>
</feature>
<feature type="active site" description="Proton acceptor" evidence="1">
    <location>
        <position position="7"/>
    </location>
</feature>
<feature type="active site" description="Proton donor" evidence="1">
    <location>
        <position position="129"/>
    </location>
</feature>
<feature type="sequence conflict" description="In Ref. 1; CAA31816." evidence="2" ref="1">
    <original>S</original>
    <variation>T</variation>
    <location>
        <position position="84"/>
    </location>
</feature>
<feature type="sequence conflict" description="In Ref. 1; CAA31816." evidence="2" ref="1">
    <original>L</original>
    <variation>V</variation>
    <location>
        <position position="126"/>
    </location>
</feature>
<keyword id="KW-0028">Amino-acid biosynthesis</keyword>
<keyword id="KW-0963">Cytoplasm</keyword>
<keyword id="KW-0368">Histidine biosynthesis</keyword>
<keyword id="KW-0413">Isomerase</keyword>
<keyword id="KW-1185">Reference proteome</keyword>
<organism>
    <name type="scientific">Escherichia coli (strain K12)</name>
    <dbReference type="NCBI Taxonomy" id="83333"/>
    <lineage>
        <taxon>Bacteria</taxon>
        <taxon>Pseudomonadati</taxon>
        <taxon>Pseudomonadota</taxon>
        <taxon>Gammaproteobacteria</taxon>
        <taxon>Enterobacterales</taxon>
        <taxon>Enterobacteriaceae</taxon>
        <taxon>Escherichia</taxon>
    </lineage>
</organism>